<name>GAR5A_BOVIN</name>
<comment type="function">
    <text evidence="1">RAB2B effector protein which promotes cytosolic DNA-induced innate immune responses. Regulates IFN responses against DNA viruses by regulating the CGAS-STING signaling axis.</text>
</comment>
<comment type="subunit">
    <text evidence="1">Interacts (via N-terminus) with RAB2B (in GTP-bound form).</text>
</comment>
<comment type="subcellular location">
    <subcellularLocation>
        <location evidence="1">Golgi apparatus</location>
    </subcellularLocation>
</comment>
<comment type="similarity">
    <text evidence="3">Belongs to the GARIN family.</text>
</comment>
<sequence length="215" mass="24228">MKRGHEPKPAFGGAGEAGPGVMAERPLVPACPTGRPGRLQRHLLSGEFDQLRDFRIFESNFVQVTRLGEVANKVTMGVAASSPALELPDLLLLAGPAKENGHLQLFGLFPLQFVQLFVHDESRWQLKVKFRTGRAFYLQLRAPPESRDREFGQWVRLLYRLRFHSAQGAVPFTQDYSALEDDEDDDEDEDRDLPAGELQAMEARLDPQMSELWGL</sequence>
<proteinExistence type="evidence at transcript level"/>
<feature type="chain" id="PRO_0000334696" description="Golgi-associated RAB2 interactor protein 5A">
    <location>
        <begin position="1"/>
        <end position="215"/>
    </location>
</feature>
<feature type="region of interest" description="Disordered" evidence="2">
    <location>
        <begin position="1"/>
        <end position="20"/>
    </location>
</feature>
<feature type="region of interest" description="Disordered" evidence="2">
    <location>
        <begin position="174"/>
        <end position="215"/>
    </location>
</feature>
<feature type="compositionally biased region" description="Acidic residues" evidence="2">
    <location>
        <begin position="178"/>
        <end position="191"/>
    </location>
</feature>
<organism>
    <name type="scientific">Bos taurus</name>
    <name type="common">Bovine</name>
    <dbReference type="NCBI Taxonomy" id="9913"/>
    <lineage>
        <taxon>Eukaryota</taxon>
        <taxon>Metazoa</taxon>
        <taxon>Chordata</taxon>
        <taxon>Craniata</taxon>
        <taxon>Vertebrata</taxon>
        <taxon>Euteleostomi</taxon>
        <taxon>Mammalia</taxon>
        <taxon>Eutheria</taxon>
        <taxon>Laurasiatheria</taxon>
        <taxon>Artiodactyla</taxon>
        <taxon>Ruminantia</taxon>
        <taxon>Pecora</taxon>
        <taxon>Bovidae</taxon>
        <taxon>Bovinae</taxon>
        <taxon>Bos</taxon>
    </lineage>
</organism>
<evidence type="ECO:0000250" key="1">
    <source>
        <dbReference type="UniProtKB" id="A1L3C1"/>
    </source>
</evidence>
<evidence type="ECO:0000256" key="2">
    <source>
        <dbReference type="SAM" id="MobiDB-lite"/>
    </source>
</evidence>
<evidence type="ECO:0000305" key="3"/>
<dbReference type="EMBL" id="BC109767">
    <property type="protein sequence ID" value="AAI09768.2"/>
    <property type="molecule type" value="mRNA"/>
</dbReference>
<dbReference type="RefSeq" id="NP_001192304.1">
    <property type="nucleotide sequence ID" value="NM_001205375.2"/>
</dbReference>
<dbReference type="FunCoup" id="Q32L49">
    <property type="interactions" value="152"/>
</dbReference>
<dbReference type="PaxDb" id="9913-ENSBTAP00000026757"/>
<dbReference type="GeneID" id="617892"/>
<dbReference type="KEGG" id="bta:617892"/>
<dbReference type="CTD" id="112703"/>
<dbReference type="eggNOG" id="ENOG502S585">
    <property type="taxonomic scope" value="Eukaryota"/>
</dbReference>
<dbReference type="InParanoid" id="Q32L49"/>
<dbReference type="OrthoDB" id="9940031at2759"/>
<dbReference type="Proteomes" id="UP000009136">
    <property type="component" value="Unplaced"/>
</dbReference>
<dbReference type="GO" id="GO:0005794">
    <property type="term" value="C:Golgi apparatus"/>
    <property type="evidence" value="ECO:0000250"/>
    <property type="project" value="UniProtKB"/>
</dbReference>
<dbReference type="GO" id="GO:0051607">
    <property type="term" value="P:defense response to virus"/>
    <property type="evidence" value="ECO:0000250"/>
    <property type="project" value="UniProtKB"/>
</dbReference>
<dbReference type="GO" id="GO:0045087">
    <property type="term" value="P:innate immune response"/>
    <property type="evidence" value="ECO:0000250"/>
    <property type="project" value="UniProtKB"/>
</dbReference>
<dbReference type="GO" id="GO:0032481">
    <property type="term" value="P:positive regulation of type I interferon production"/>
    <property type="evidence" value="ECO:0000250"/>
    <property type="project" value="UniProtKB"/>
</dbReference>
<dbReference type="InterPro" id="IPR022168">
    <property type="entry name" value="GARIL-like_Rab2B-bd"/>
</dbReference>
<dbReference type="PANTHER" id="PTHR22574">
    <property type="match status" value="1"/>
</dbReference>
<dbReference type="PANTHER" id="PTHR22574:SF5">
    <property type="entry name" value="GOLGI-ASSOCIATED RAB2 INTERACTOR PROTEIN 5A"/>
    <property type="match status" value="1"/>
</dbReference>
<dbReference type="Pfam" id="PF12480">
    <property type="entry name" value="GARIL_Rab2_bd"/>
    <property type="match status" value="1"/>
</dbReference>
<keyword id="KW-0333">Golgi apparatus</keyword>
<keyword id="KW-1185">Reference proteome</keyword>
<accession>Q32L49</accession>
<reference key="1">
    <citation type="submission" date="2005-11" db="EMBL/GenBank/DDBJ databases">
        <authorList>
            <consortium name="NIH - Mammalian Gene Collection (MGC) project"/>
        </authorList>
    </citation>
    <scope>NUCLEOTIDE SEQUENCE [LARGE SCALE MRNA]</scope>
    <source>
        <strain>Crossbred X Angus</strain>
        <tissue>Liver</tissue>
    </source>
</reference>
<gene>
    <name type="primary">GARIN5A</name>
    <name type="synonym">FAM71E1</name>
</gene>
<protein>
    <recommendedName>
        <fullName>Golgi-associated RAB2 interactor protein 5A</fullName>
    </recommendedName>
</protein>